<proteinExistence type="inferred from homology"/>
<dbReference type="EMBL" id="FM178379">
    <property type="protein sequence ID" value="CAQ78386.1"/>
    <property type="molecule type" value="Genomic_DNA"/>
</dbReference>
<dbReference type="RefSeq" id="WP_012549506.1">
    <property type="nucleotide sequence ID" value="NC_011312.1"/>
</dbReference>
<dbReference type="KEGG" id="vsa:VSAL_I0701"/>
<dbReference type="eggNOG" id="COG1671">
    <property type="taxonomic scope" value="Bacteria"/>
</dbReference>
<dbReference type="HOGENOM" id="CLU_106619_2_1_6"/>
<dbReference type="Proteomes" id="UP000001730">
    <property type="component" value="Chromosome 1"/>
</dbReference>
<dbReference type="CDD" id="cd18720">
    <property type="entry name" value="PIN_YqxD-like"/>
    <property type="match status" value="1"/>
</dbReference>
<dbReference type="HAMAP" id="MF_00489">
    <property type="entry name" value="UPF0178"/>
    <property type="match status" value="1"/>
</dbReference>
<dbReference type="InterPro" id="IPR003791">
    <property type="entry name" value="UPF0178"/>
</dbReference>
<dbReference type="NCBIfam" id="NF001095">
    <property type="entry name" value="PRK00124.1"/>
    <property type="match status" value="1"/>
</dbReference>
<dbReference type="PANTHER" id="PTHR35146">
    <property type="entry name" value="UPF0178 PROTEIN YAII"/>
    <property type="match status" value="1"/>
</dbReference>
<dbReference type="PANTHER" id="PTHR35146:SF1">
    <property type="entry name" value="UPF0178 PROTEIN YAII"/>
    <property type="match status" value="1"/>
</dbReference>
<dbReference type="Pfam" id="PF02639">
    <property type="entry name" value="DUF188"/>
    <property type="match status" value="1"/>
</dbReference>
<name>Y701_ALISL</name>
<accession>B6EGH0</accession>
<reference key="1">
    <citation type="journal article" date="2008" name="BMC Genomics">
        <title>The genome sequence of the fish pathogen Aliivibrio salmonicida strain LFI1238 shows extensive evidence of gene decay.</title>
        <authorList>
            <person name="Hjerde E."/>
            <person name="Lorentzen M.S."/>
            <person name="Holden M.T."/>
            <person name="Seeger K."/>
            <person name="Paulsen S."/>
            <person name="Bason N."/>
            <person name="Churcher C."/>
            <person name="Harris D."/>
            <person name="Norbertczak H."/>
            <person name="Quail M.A."/>
            <person name="Sanders S."/>
            <person name="Thurston S."/>
            <person name="Parkhill J."/>
            <person name="Willassen N.P."/>
            <person name="Thomson N.R."/>
        </authorList>
    </citation>
    <scope>NUCLEOTIDE SEQUENCE [LARGE SCALE GENOMIC DNA]</scope>
    <source>
        <strain>LFI1238</strain>
    </source>
</reference>
<evidence type="ECO:0000255" key="1">
    <source>
        <dbReference type="HAMAP-Rule" id="MF_00489"/>
    </source>
</evidence>
<gene>
    <name type="ordered locus">VSAL_I0701</name>
</gene>
<comment type="similarity">
    <text evidence="1">Belongs to the UPF0178 family.</text>
</comment>
<organism>
    <name type="scientific">Aliivibrio salmonicida (strain LFI1238)</name>
    <name type="common">Vibrio salmonicida (strain LFI1238)</name>
    <dbReference type="NCBI Taxonomy" id="316275"/>
    <lineage>
        <taxon>Bacteria</taxon>
        <taxon>Pseudomonadati</taxon>
        <taxon>Pseudomonadota</taxon>
        <taxon>Gammaproteobacteria</taxon>
        <taxon>Vibrionales</taxon>
        <taxon>Vibrionaceae</taxon>
        <taxon>Aliivibrio</taxon>
    </lineage>
</organism>
<sequence length="151" mass="16605">MQIWVDADACPKVVKEVLCRAATRTGLQITFVANHYVPVPTAPNIKSIQVESGFDVADDEIVRRSEAGDLVISGDIPLAAELIEKKVQVLNPRGELYTEATIKARLNIRDFMDTMRASGIQTGGPAALSQTDRREFANQLDRILAKVKKTI</sequence>
<feature type="chain" id="PRO_1000126171" description="UPF0178 protein VSAL_I0701">
    <location>
        <begin position="1"/>
        <end position="151"/>
    </location>
</feature>
<protein>
    <recommendedName>
        <fullName evidence="1">UPF0178 protein VSAL_I0701</fullName>
    </recommendedName>
</protein>